<keyword id="KW-0378">Hydrolase</keyword>
<keyword id="KW-0645">Protease</keyword>
<keyword id="KW-0964">Secreted</keyword>
<keyword id="KW-0732">Signal</keyword>
<keyword id="KW-0788">Thiol protease</keyword>
<keyword id="KW-0843">Virulence</keyword>
<keyword id="KW-0865">Zymogen</keyword>
<proteinExistence type="inferred from homology"/>
<protein>
    <recommendedName>
        <fullName>Staphopain B</fullName>
        <ecNumber>3.4.22.-</ecNumber>
    </recommendedName>
    <alternativeName>
        <fullName>Staphylococcal cysteine proteinase B</fullName>
    </alternativeName>
    <alternativeName>
        <fullName>Staphylopain B</fullName>
    </alternativeName>
</protein>
<organism>
    <name type="scientific">Staphylococcus aureus (strain MW2)</name>
    <dbReference type="NCBI Taxonomy" id="196620"/>
    <lineage>
        <taxon>Bacteria</taxon>
        <taxon>Bacillati</taxon>
        <taxon>Bacillota</taxon>
        <taxon>Bacilli</taxon>
        <taxon>Bacillales</taxon>
        <taxon>Staphylococcaceae</taxon>
        <taxon>Staphylococcus</taxon>
    </lineage>
</organism>
<evidence type="ECO:0000250" key="1"/>
<evidence type="ECO:0000250" key="2">
    <source>
        <dbReference type="UniProtKB" id="P0C1S6"/>
    </source>
</evidence>
<evidence type="ECO:0000255" key="3">
    <source>
        <dbReference type="PROSITE-ProRule" id="PRU10089"/>
    </source>
</evidence>
<evidence type="ECO:0000305" key="4"/>
<gene>
    <name type="primary">sspB</name>
    <name type="ordered locus">MW0931</name>
</gene>
<comment type="function">
    <text evidence="2">Cysteine protease that plays an important role in the inhibition of host innate immune response. Degrades host elastin, fibrogen, fibronectin and kininogen. Blocks phagocytosis of opsonised S.aureus by neutrophils and monocytes by inducing their death in a proteolytic activity-dependent manner. Decreases surface expression of the 'don't eat me' signal CD31 on neutrophils. Cleaves host galectin-3/LGALS3, thereby inhibiting the neutrophil-activating ability of the lectin.</text>
</comment>
<comment type="activity regulation">
    <text evidence="1">Prematurely activated/folded staphopain B is inhibited by staphostatin B (SspC), which is probably required to protect staphylococcal cytoplasmic proteins from degradation by SspB.</text>
</comment>
<comment type="subunit">
    <text evidence="1">In the cytoplasm, prematurely activated/folded SspB forms a stable non-covalent complex with SspC.</text>
</comment>
<comment type="subcellular location">
    <subcellularLocation>
        <location evidence="1">Secreted</location>
    </subcellularLocation>
</comment>
<comment type="PTM">
    <text evidence="1">Proteolytically cleaved by staphylococcal serine protease (SspA).</text>
</comment>
<comment type="miscellaneous">
    <text evidence="1">The cascade of activation of extracellular proteases proceeds from the metalloprotease aureolysin (aur), through SspA to SspB.</text>
</comment>
<comment type="similarity">
    <text evidence="4">Belongs to the peptidase C47 family.</text>
</comment>
<feature type="signal peptide" evidence="1">
    <location>
        <begin position="1"/>
        <end position="36"/>
    </location>
</feature>
<feature type="propeptide" id="PRO_0000026571" evidence="1">
    <location>
        <begin position="37"/>
        <end position="219"/>
    </location>
</feature>
<feature type="chain" id="PRO_0000026572" description="Staphopain B">
    <location>
        <begin position="220"/>
        <end position="393"/>
    </location>
</feature>
<feature type="active site" evidence="3">
    <location>
        <position position="243"/>
    </location>
</feature>
<feature type="active site" evidence="3">
    <location>
        <position position="340"/>
    </location>
</feature>
<feature type="active site" evidence="3">
    <location>
        <position position="360"/>
    </location>
</feature>
<feature type="site" description="Cleavage; by SspA" evidence="1">
    <location>
        <begin position="219"/>
        <end position="220"/>
    </location>
</feature>
<reference key="1">
    <citation type="journal article" date="2002" name="Lancet">
        <title>Genome and virulence determinants of high virulence community-acquired MRSA.</title>
        <authorList>
            <person name="Baba T."/>
            <person name="Takeuchi F."/>
            <person name="Kuroda M."/>
            <person name="Yuzawa H."/>
            <person name="Aoki K."/>
            <person name="Oguchi A."/>
            <person name="Nagai Y."/>
            <person name="Iwama N."/>
            <person name="Asano K."/>
            <person name="Naimi T."/>
            <person name="Kuroda H."/>
            <person name="Cui L."/>
            <person name="Yamamoto K."/>
            <person name="Hiramatsu K."/>
        </authorList>
    </citation>
    <scope>NUCLEOTIDE SEQUENCE [LARGE SCALE GENOMIC DNA]</scope>
    <source>
        <strain>MW2</strain>
    </source>
</reference>
<sequence length="393" mass="44611">MNSSYKSRVFNIISIIMVSMLILSLGAFANNNKAKADSHSKQLEINVKSDKVPQKVKDLAQQQFAGYAKALDKQSNAKTGKYELGEAFKIYKFNGEEDNSYYYPVIKDGKIVYTLTLSPKNKDDLNKSKEDMNYSVKISNFIAKDLDQIKDKNSNITVLTDEKGFYFEEDGKVRLVKATPLPGNVKEKESAKTVSSKLKQELKNTVTPTKVEENEAIQEDQVQYENTLKNFKIREQQFDNSWCAGFSMAALLNATKNTDTYNAHDIMRTLYPEVSEQDLPNCSTFPNQMIEYGKSQGRDIHYQEGVPSYEQVDQLTKDNVGIMILAQSVSQNPNDPHLGHALAVVGNAKINDQEKLIYWNPWDTELSIQDADSSLLHLSFNRDYNWYGSMIGY</sequence>
<accession>Q8NX99</accession>
<name>SSPB_STAAW</name>
<dbReference type="EC" id="3.4.22.-"/>
<dbReference type="EMBL" id="BA000033">
    <property type="protein sequence ID" value="BAB94796.1"/>
    <property type="molecule type" value="Genomic_DNA"/>
</dbReference>
<dbReference type="RefSeq" id="WP_001089097.1">
    <property type="nucleotide sequence ID" value="NC_003923.1"/>
</dbReference>
<dbReference type="SMR" id="Q8NX99"/>
<dbReference type="MEROPS" id="C47.002"/>
<dbReference type="KEGG" id="sam:MW0931"/>
<dbReference type="HOGENOM" id="CLU_069043_0_0_9"/>
<dbReference type="PRO" id="PR:Q8NX99"/>
<dbReference type="GO" id="GO:0005576">
    <property type="term" value="C:extracellular region"/>
    <property type="evidence" value="ECO:0007669"/>
    <property type="project" value="UniProtKB-SubCell"/>
</dbReference>
<dbReference type="GO" id="GO:0008234">
    <property type="term" value="F:cysteine-type peptidase activity"/>
    <property type="evidence" value="ECO:0007669"/>
    <property type="project" value="UniProtKB-KW"/>
</dbReference>
<dbReference type="GO" id="GO:0006508">
    <property type="term" value="P:proteolysis"/>
    <property type="evidence" value="ECO:0007669"/>
    <property type="project" value="UniProtKB-KW"/>
</dbReference>
<dbReference type="Gene3D" id="3.90.70.10">
    <property type="entry name" value="Cysteine proteinases"/>
    <property type="match status" value="1"/>
</dbReference>
<dbReference type="Gene3D" id="3.10.500.10">
    <property type="entry name" value="Staphopain proregion domain"/>
    <property type="match status" value="1"/>
</dbReference>
<dbReference type="InterPro" id="IPR046350">
    <property type="entry name" value="Cystatin_sf"/>
</dbReference>
<dbReference type="InterPro" id="IPR038765">
    <property type="entry name" value="Papain-like_cys_pep_sf"/>
</dbReference>
<dbReference type="InterPro" id="IPR025660">
    <property type="entry name" value="Pept_his_AS"/>
</dbReference>
<dbReference type="InterPro" id="IPR008750">
    <property type="entry name" value="Peptidase_C47"/>
</dbReference>
<dbReference type="InterPro" id="IPR028076">
    <property type="entry name" value="Staphopain_pro"/>
</dbReference>
<dbReference type="InterPro" id="IPR037155">
    <property type="entry name" value="Staphopain_pro_sf"/>
</dbReference>
<dbReference type="Pfam" id="PF05543">
    <property type="entry name" value="Peptidase_C47"/>
    <property type="match status" value="1"/>
</dbReference>
<dbReference type="Pfam" id="PF14731">
    <property type="entry name" value="Staphopain_pro"/>
    <property type="match status" value="1"/>
</dbReference>
<dbReference type="SUPFAM" id="SSF54403">
    <property type="entry name" value="Cystatin/monellin"/>
    <property type="match status" value="1"/>
</dbReference>
<dbReference type="SUPFAM" id="SSF54001">
    <property type="entry name" value="Cysteine proteinases"/>
    <property type="match status" value="1"/>
</dbReference>
<dbReference type="PROSITE" id="PS00639">
    <property type="entry name" value="THIOL_PROTEASE_HIS"/>
    <property type="match status" value="1"/>
</dbReference>